<keyword id="KW-1185">Reference proteome</keyword>
<comment type="interaction">
    <interactant intactId="EBI-195214">
        <id>Q9VTY4</id>
    </interactant>
    <interactant intactId="EBI-15108681">
        <id>Q9W0Q3</id>
        <label>BORCS6</label>
    </interactant>
    <organismsDiffer>false</organismsDiffer>
    <experiments>4</experiments>
</comment>
<comment type="interaction">
    <interactant intactId="EBI-195214">
        <id>Q9VTY4</id>
    </interactant>
    <interactant intactId="EBI-99679">
        <id>O97420</id>
        <label>CG14818</label>
    </interactant>
    <organismsDiffer>false</organismsDiffer>
    <experiments>4</experiments>
</comment>
<comment type="interaction">
    <interactant intactId="EBI-195214">
        <id>Q9VTY4</id>
    </interactant>
    <interactant intactId="EBI-499181">
        <id>Q8IG84</id>
        <label>Tm1</label>
    </interactant>
    <organismsDiffer>false</organismsDiffer>
    <experiments>4</experiments>
</comment>
<comment type="similarity">
    <text evidence="2">Belongs to the KXD1 family.</text>
</comment>
<reference key="1">
    <citation type="journal article" date="2000" name="Science">
        <title>The genome sequence of Drosophila melanogaster.</title>
        <authorList>
            <person name="Adams M.D."/>
            <person name="Celniker S.E."/>
            <person name="Holt R.A."/>
            <person name="Evans C.A."/>
            <person name="Gocayne J.D."/>
            <person name="Amanatides P.G."/>
            <person name="Scherer S.E."/>
            <person name="Li P.W."/>
            <person name="Hoskins R.A."/>
            <person name="Galle R.F."/>
            <person name="George R.A."/>
            <person name="Lewis S.E."/>
            <person name="Richards S."/>
            <person name="Ashburner M."/>
            <person name="Henderson S.N."/>
            <person name="Sutton G.G."/>
            <person name="Wortman J.R."/>
            <person name="Yandell M.D."/>
            <person name="Zhang Q."/>
            <person name="Chen L.X."/>
            <person name="Brandon R.C."/>
            <person name="Rogers Y.-H.C."/>
            <person name="Blazej R.G."/>
            <person name="Champe M."/>
            <person name="Pfeiffer B.D."/>
            <person name="Wan K.H."/>
            <person name="Doyle C."/>
            <person name="Baxter E.G."/>
            <person name="Helt G."/>
            <person name="Nelson C.R."/>
            <person name="Miklos G.L.G."/>
            <person name="Abril J.F."/>
            <person name="Agbayani A."/>
            <person name="An H.-J."/>
            <person name="Andrews-Pfannkoch C."/>
            <person name="Baldwin D."/>
            <person name="Ballew R.M."/>
            <person name="Basu A."/>
            <person name="Baxendale J."/>
            <person name="Bayraktaroglu L."/>
            <person name="Beasley E.M."/>
            <person name="Beeson K.Y."/>
            <person name="Benos P.V."/>
            <person name="Berman B.P."/>
            <person name="Bhandari D."/>
            <person name="Bolshakov S."/>
            <person name="Borkova D."/>
            <person name="Botchan M.R."/>
            <person name="Bouck J."/>
            <person name="Brokstein P."/>
            <person name="Brottier P."/>
            <person name="Burtis K.C."/>
            <person name="Busam D.A."/>
            <person name="Butler H."/>
            <person name="Cadieu E."/>
            <person name="Center A."/>
            <person name="Chandra I."/>
            <person name="Cherry J.M."/>
            <person name="Cawley S."/>
            <person name="Dahlke C."/>
            <person name="Davenport L.B."/>
            <person name="Davies P."/>
            <person name="de Pablos B."/>
            <person name="Delcher A."/>
            <person name="Deng Z."/>
            <person name="Mays A.D."/>
            <person name="Dew I."/>
            <person name="Dietz S.M."/>
            <person name="Dodson K."/>
            <person name="Doup L.E."/>
            <person name="Downes M."/>
            <person name="Dugan-Rocha S."/>
            <person name="Dunkov B.C."/>
            <person name="Dunn P."/>
            <person name="Durbin K.J."/>
            <person name="Evangelista C.C."/>
            <person name="Ferraz C."/>
            <person name="Ferriera S."/>
            <person name="Fleischmann W."/>
            <person name="Fosler C."/>
            <person name="Gabrielian A.E."/>
            <person name="Garg N.S."/>
            <person name="Gelbart W.M."/>
            <person name="Glasser K."/>
            <person name="Glodek A."/>
            <person name="Gong F."/>
            <person name="Gorrell J.H."/>
            <person name="Gu Z."/>
            <person name="Guan P."/>
            <person name="Harris M."/>
            <person name="Harris N.L."/>
            <person name="Harvey D.A."/>
            <person name="Heiman T.J."/>
            <person name="Hernandez J.R."/>
            <person name="Houck J."/>
            <person name="Hostin D."/>
            <person name="Houston K.A."/>
            <person name="Howland T.J."/>
            <person name="Wei M.-H."/>
            <person name="Ibegwam C."/>
            <person name="Jalali M."/>
            <person name="Kalush F."/>
            <person name="Karpen G.H."/>
            <person name="Ke Z."/>
            <person name="Kennison J.A."/>
            <person name="Ketchum K.A."/>
            <person name="Kimmel B.E."/>
            <person name="Kodira C.D."/>
            <person name="Kraft C.L."/>
            <person name="Kravitz S."/>
            <person name="Kulp D."/>
            <person name="Lai Z."/>
            <person name="Lasko P."/>
            <person name="Lei Y."/>
            <person name="Levitsky A.A."/>
            <person name="Li J.H."/>
            <person name="Li Z."/>
            <person name="Liang Y."/>
            <person name="Lin X."/>
            <person name="Liu X."/>
            <person name="Mattei B."/>
            <person name="McIntosh T.C."/>
            <person name="McLeod M.P."/>
            <person name="McPherson D."/>
            <person name="Merkulov G."/>
            <person name="Milshina N.V."/>
            <person name="Mobarry C."/>
            <person name="Morris J."/>
            <person name="Moshrefi A."/>
            <person name="Mount S.M."/>
            <person name="Moy M."/>
            <person name="Murphy B."/>
            <person name="Murphy L."/>
            <person name="Muzny D.M."/>
            <person name="Nelson D.L."/>
            <person name="Nelson D.R."/>
            <person name="Nelson K.A."/>
            <person name="Nixon K."/>
            <person name="Nusskern D.R."/>
            <person name="Pacleb J.M."/>
            <person name="Palazzolo M."/>
            <person name="Pittman G.S."/>
            <person name="Pan S."/>
            <person name="Pollard J."/>
            <person name="Puri V."/>
            <person name="Reese M.G."/>
            <person name="Reinert K."/>
            <person name="Remington K."/>
            <person name="Saunders R.D.C."/>
            <person name="Scheeler F."/>
            <person name="Shen H."/>
            <person name="Shue B.C."/>
            <person name="Siden-Kiamos I."/>
            <person name="Simpson M."/>
            <person name="Skupski M.P."/>
            <person name="Smith T.J."/>
            <person name="Spier E."/>
            <person name="Spradling A.C."/>
            <person name="Stapleton M."/>
            <person name="Strong R."/>
            <person name="Sun E."/>
            <person name="Svirskas R."/>
            <person name="Tector C."/>
            <person name="Turner R."/>
            <person name="Venter E."/>
            <person name="Wang A.H."/>
            <person name="Wang X."/>
            <person name="Wang Z.-Y."/>
            <person name="Wassarman D.A."/>
            <person name="Weinstock G.M."/>
            <person name="Weissenbach J."/>
            <person name="Williams S.M."/>
            <person name="Woodage T."/>
            <person name="Worley K.C."/>
            <person name="Wu D."/>
            <person name="Yang S."/>
            <person name="Yao Q.A."/>
            <person name="Ye J."/>
            <person name="Yeh R.-F."/>
            <person name="Zaveri J.S."/>
            <person name="Zhan M."/>
            <person name="Zhang G."/>
            <person name="Zhao Q."/>
            <person name="Zheng L."/>
            <person name="Zheng X.H."/>
            <person name="Zhong F.N."/>
            <person name="Zhong W."/>
            <person name="Zhou X."/>
            <person name="Zhu S.C."/>
            <person name="Zhu X."/>
            <person name="Smith H.O."/>
            <person name="Gibbs R.A."/>
            <person name="Myers E.W."/>
            <person name="Rubin G.M."/>
            <person name="Venter J.C."/>
        </authorList>
    </citation>
    <scope>NUCLEOTIDE SEQUENCE [LARGE SCALE GENOMIC DNA]</scope>
    <source>
        <strain>Berkeley</strain>
    </source>
</reference>
<reference key="2">
    <citation type="journal article" date="2002" name="Genome Biol.">
        <title>Annotation of the Drosophila melanogaster euchromatic genome: a systematic review.</title>
        <authorList>
            <person name="Misra S."/>
            <person name="Crosby M.A."/>
            <person name="Mungall C.J."/>
            <person name="Matthews B.B."/>
            <person name="Campbell K.S."/>
            <person name="Hradecky P."/>
            <person name="Huang Y."/>
            <person name="Kaminker J.S."/>
            <person name="Millburn G.H."/>
            <person name="Prochnik S.E."/>
            <person name="Smith C.D."/>
            <person name="Tupy J.L."/>
            <person name="Whitfield E.J."/>
            <person name="Bayraktaroglu L."/>
            <person name="Berman B.P."/>
            <person name="Bettencourt B.R."/>
            <person name="Celniker S.E."/>
            <person name="de Grey A.D.N.J."/>
            <person name="Drysdale R.A."/>
            <person name="Harris N.L."/>
            <person name="Richter J."/>
            <person name="Russo S."/>
            <person name="Schroeder A.J."/>
            <person name="Shu S.Q."/>
            <person name="Stapleton M."/>
            <person name="Yamada C."/>
            <person name="Ashburner M."/>
            <person name="Gelbart W.M."/>
            <person name="Rubin G.M."/>
            <person name="Lewis S.E."/>
        </authorList>
    </citation>
    <scope>GENOME REANNOTATION</scope>
    <source>
        <strain>Berkeley</strain>
    </source>
</reference>
<reference key="3">
    <citation type="submission" date="2003-03" db="EMBL/GenBank/DDBJ databases">
        <authorList>
            <person name="Stapleton M."/>
            <person name="Brokstein P."/>
            <person name="Hong L."/>
            <person name="Agbayani A."/>
            <person name="Carlson J.W."/>
            <person name="Champe M."/>
            <person name="Chavez C."/>
            <person name="Dorsett V."/>
            <person name="Dresnek D."/>
            <person name="Farfan D."/>
            <person name="Frise E."/>
            <person name="George R.A."/>
            <person name="Gonzalez M."/>
            <person name="Guarin H."/>
            <person name="Kronmiller B."/>
            <person name="Li P.W."/>
            <person name="Liao G."/>
            <person name="Miranda A."/>
            <person name="Mungall C.J."/>
            <person name="Nunoo J."/>
            <person name="Pacleb J.M."/>
            <person name="Paragas V."/>
            <person name="Park S."/>
            <person name="Patel S."/>
            <person name="Phouanenavong S."/>
            <person name="Wan K.H."/>
            <person name="Yu C."/>
            <person name="Lewis S.E."/>
            <person name="Rubin G.M."/>
            <person name="Celniker S.E."/>
        </authorList>
    </citation>
    <scope>NUCLEOTIDE SEQUENCE [LARGE SCALE MRNA]</scope>
    <source>
        <strain>Berkeley</strain>
        <tissue>Ovary</tissue>
    </source>
</reference>
<sequence>MSHLGLADVHQSEDATPDLESFTGFGNSAAEAFIQSLAGMVNQGDVETMIRAQKQMLQRFEKTNEMLLNCNALSQSRLKSASEDFKRHVKCLSEMKKDLDYIFRKIRIIKQKLQSQFPAIYAEVQPQRSSLAEEAEDDTEAQAKKTAETPAPAAAKPVLSTKKSAATIEYVQMEEAVDNGTVEIENELIKRVCSVETANPNDSSDCTSEDTG</sequence>
<accession>Q9VTY4</accession>
<protein>
    <recommendedName>
        <fullName>KxDL motif-containing protein CG10681</fullName>
    </recommendedName>
</protein>
<feature type="chain" id="PRO_0000295265" description="KxDL motif-containing protein CG10681">
    <location>
        <begin position="1"/>
        <end position="212"/>
    </location>
</feature>
<feature type="region of interest" description="Disordered" evidence="1">
    <location>
        <begin position="128"/>
        <end position="159"/>
    </location>
</feature>
<feature type="compositionally biased region" description="Low complexity" evidence="1">
    <location>
        <begin position="148"/>
        <end position="157"/>
    </location>
</feature>
<name>KXDL1_DROME</name>
<evidence type="ECO:0000256" key="1">
    <source>
        <dbReference type="SAM" id="MobiDB-lite"/>
    </source>
</evidence>
<evidence type="ECO:0000305" key="2"/>
<gene>
    <name type="ORF">CG10681</name>
</gene>
<dbReference type="EMBL" id="AE014296">
    <property type="protein sequence ID" value="AAF49911.1"/>
    <property type="molecule type" value="Genomic_DNA"/>
</dbReference>
<dbReference type="EMBL" id="BT004913">
    <property type="protein sequence ID" value="AAO49166.1"/>
    <property type="molecule type" value="mRNA"/>
</dbReference>
<dbReference type="RefSeq" id="NP_001261766.1">
    <property type="nucleotide sequence ID" value="NM_001274837.1"/>
</dbReference>
<dbReference type="RefSeq" id="NP_648580.1">
    <property type="nucleotide sequence ID" value="NM_140323.2"/>
</dbReference>
<dbReference type="SMR" id="Q9VTY4"/>
<dbReference type="BioGRID" id="64775">
    <property type="interactions" value="16"/>
</dbReference>
<dbReference type="ComplexPortal" id="CPX-2760">
    <property type="entry name" value="BORC complex"/>
</dbReference>
<dbReference type="FunCoup" id="Q9VTY4">
    <property type="interactions" value="134"/>
</dbReference>
<dbReference type="IntAct" id="Q9VTY4">
    <property type="interactions" value="11"/>
</dbReference>
<dbReference type="STRING" id="7227.FBpp0304880"/>
<dbReference type="PaxDb" id="7227-FBpp0075689"/>
<dbReference type="DNASU" id="39425"/>
<dbReference type="EnsemblMetazoa" id="FBtr0075957">
    <property type="protein sequence ID" value="FBpp0075689"/>
    <property type="gene ID" value="FBgn0036291"/>
</dbReference>
<dbReference type="EnsemblMetazoa" id="FBtr0332634">
    <property type="protein sequence ID" value="FBpp0304880"/>
    <property type="gene ID" value="FBgn0036291"/>
</dbReference>
<dbReference type="GeneID" id="39425"/>
<dbReference type="KEGG" id="dme:Dmel_CG10681"/>
<dbReference type="UCSC" id="CG10681-RA">
    <property type="organism name" value="d. melanogaster"/>
</dbReference>
<dbReference type="AGR" id="FB:FBgn0036291"/>
<dbReference type="FlyBase" id="FBgn0036291">
    <property type="gene designation" value="CG10681"/>
</dbReference>
<dbReference type="VEuPathDB" id="VectorBase:FBgn0036291"/>
<dbReference type="eggNOG" id="KOG3443">
    <property type="taxonomic scope" value="Eukaryota"/>
</dbReference>
<dbReference type="GeneTree" id="ENSGT00530000064192"/>
<dbReference type="HOGENOM" id="CLU_094353_0_0_1"/>
<dbReference type="InParanoid" id="Q9VTY4"/>
<dbReference type="OMA" id="FKRHVKL"/>
<dbReference type="OrthoDB" id="10258877at2759"/>
<dbReference type="PhylomeDB" id="Q9VTY4"/>
<dbReference type="BioGRID-ORCS" id="39425">
    <property type="hits" value="1 hit in 1 CRISPR screen"/>
</dbReference>
<dbReference type="GenomeRNAi" id="39425"/>
<dbReference type="PRO" id="PR:Q9VTY4"/>
<dbReference type="Proteomes" id="UP000000803">
    <property type="component" value="Chromosome 3L"/>
</dbReference>
<dbReference type="Bgee" id="FBgn0036291">
    <property type="expression patterns" value="Expressed in saliva-secreting gland and 61 other cell types or tissues"/>
</dbReference>
<dbReference type="ExpressionAtlas" id="Q9VTY4">
    <property type="expression patterns" value="baseline and differential"/>
</dbReference>
<dbReference type="GO" id="GO:0099078">
    <property type="term" value="C:BORC complex"/>
    <property type="evidence" value="ECO:0000318"/>
    <property type="project" value="GO_Central"/>
</dbReference>
<dbReference type="GO" id="GO:0032418">
    <property type="term" value="P:lysosome localization"/>
    <property type="evidence" value="ECO:0000318"/>
    <property type="project" value="GO_Central"/>
</dbReference>
<dbReference type="InterPro" id="IPR039843">
    <property type="entry name" value="KXD1-like"/>
</dbReference>
<dbReference type="InterPro" id="IPR019371">
    <property type="entry name" value="KxDL_dom"/>
</dbReference>
<dbReference type="PANTHER" id="PTHR13511">
    <property type="entry name" value="KXDL MOTIF-CONTAINING PROTEIN 1"/>
    <property type="match status" value="1"/>
</dbReference>
<dbReference type="PANTHER" id="PTHR13511:SF0">
    <property type="entry name" value="KXDL MOTIF-CONTAINING PROTEIN 1"/>
    <property type="match status" value="1"/>
</dbReference>
<dbReference type="Pfam" id="PF10241">
    <property type="entry name" value="KxDL"/>
    <property type="match status" value="1"/>
</dbReference>
<organism>
    <name type="scientific">Drosophila melanogaster</name>
    <name type="common">Fruit fly</name>
    <dbReference type="NCBI Taxonomy" id="7227"/>
    <lineage>
        <taxon>Eukaryota</taxon>
        <taxon>Metazoa</taxon>
        <taxon>Ecdysozoa</taxon>
        <taxon>Arthropoda</taxon>
        <taxon>Hexapoda</taxon>
        <taxon>Insecta</taxon>
        <taxon>Pterygota</taxon>
        <taxon>Neoptera</taxon>
        <taxon>Endopterygota</taxon>
        <taxon>Diptera</taxon>
        <taxon>Brachycera</taxon>
        <taxon>Muscomorpha</taxon>
        <taxon>Ephydroidea</taxon>
        <taxon>Drosophilidae</taxon>
        <taxon>Drosophila</taxon>
        <taxon>Sophophora</taxon>
    </lineage>
</organism>
<proteinExistence type="evidence at protein level"/>